<evidence type="ECO:0000250" key="1"/>
<evidence type="ECO:0000255" key="2"/>
<evidence type="ECO:0000256" key="3">
    <source>
        <dbReference type="SAM" id="MobiDB-lite"/>
    </source>
</evidence>
<evidence type="ECO:0000305" key="4"/>
<keyword id="KW-0325">Glycoprotein</keyword>
<keyword id="KW-1267">Proteomics identification</keyword>
<keyword id="KW-1185">Reference proteome</keyword>
<keyword id="KW-0677">Repeat</keyword>
<keyword id="KW-0964">Secreted</keyword>
<keyword id="KW-0732">Signal</keyword>
<comment type="function">
    <text evidence="4">May be signaling molecules that resemble neuropeptides and that act by binding to alpha-neurexins and possibly other receptors.</text>
</comment>
<comment type="subcellular location">
    <subcellularLocation>
        <location evidence="4">Secreted</location>
    </subcellularLocation>
</comment>
<comment type="tissue specificity">
    <text>Expressed in brain, spleen, and testis.</text>
</comment>
<comment type="PTM">
    <text evidence="1">May be proteolytically processed at the boundary between the N-terminal non-conserved and the central conserved domain in neuron-like cells.</text>
</comment>
<comment type="similarity">
    <text evidence="4">Belongs to the neurexophilin family.</text>
</comment>
<protein>
    <recommendedName>
        <fullName>Neurexophilin-4</fullName>
    </recommendedName>
</protein>
<sequence>MRLLPEWFLLLFGPWLLRKAVSAQIPESGRPQYLGLRPAAAGAGAPGQQLPEPRSSDGLGVGRAWSWAWPTNHTGALARAGAAGALPAQRTKRKPSIKAARAKKIFGWGDFYFRVHTLKFSLLVTGKIVDHVNGTFSVYFRHNSSSLGNLSVSIVPPSKRVEFGGVWLPGPVPHPLQSTLALEGVLPGLGPPLGMAAAAAGPGLGGSLGGALAGPLGGALGVPGAKESRAFNCHVEYEKTNRARKHRPCLYDPSQVCFTEHTQSQAAWLCAKPFKVICIFVSFLSFDYKLVQKVCPDYNFQSEHPYFG</sequence>
<dbReference type="EMBL" id="AY358614">
    <property type="protein sequence ID" value="AAQ88977.1"/>
    <property type="molecule type" value="mRNA"/>
</dbReference>
<dbReference type="EMBL" id="AK290949">
    <property type="protein sequence ID" value="BAF83638.1"/>
    <property type="molecule type" value="mRNA"/>
</dbReference>
<dbReference type="EMBL" id="BC036679">
    <property type="protein sequence ID" value="AAH36679.1"/>
    <property type="molecule type" value="mRNA"/>
</dbReference>
<dbReference type="EMBL" id="BC053581">
    <property type="protein sequence ID" value="AAH53581.1"/>
    <property type="molecule type" value="mRNA"/>
</dbReference>
<dbReference type="EMBL" id="AF043469">
    <property type="protein sequence ID" value="AAD02282.1"/>
    <property type="molecule type" value="mRNA"/>
</dbReference>
<dbReference type="CCDS" id="CCDS8933.1"/>
<dbReference type="RefSeq" id="NP_009155.1">
    <property type="nucleotide sequence ID" value="NM_007224.4"/>
</dbReference>
<dbReference type="SMR" id="O95158"/>
<dbReference type="BioGRID" id="116408">
    <property type="interactions" value="71"/>
</dbReference>
<dbReference type="FunCoup" id="O95158">
    <property type="interactions" value="80"/>
</dbReference>
<dbReference type="IntAct" id="O95158">
    <property type="interactions" value="28"/>
</dbReference>
<dbReference type="STRING" id="9606.ENSP00000333593"/>
<dbReference type="GlyCosmos" id="O95158">
    <property type="glycosylation" value="4 sites, No reported glycans"/>
</dbReference>
<dbReference type="GlyGen" id="O95158">
    <property type="glycosylation" value="4 sites, 4 N-linked glycans (4 sites)"/>
</dbReference>
<dbReference type="iPTMnet" id="O95158"/>
<dbReference type="PhosphoSitePlus" id="O95158"/>
<dbReference type="BioMuta" id="NXPH4"/>
<dbReference type="jPOST" id="O95158"/>
<dbReference type="MassIVE" id="O95158"/>
<dbReference type="PaxDb" id="9606-ENSP00000333593"/>
<dbReference type="PeptideAtlas" id="O95158"/>
<dbReference type="ProteomicsDB" id="50675"/>
<dbReference type="Pumba" id="O95158"/>
<dbReference type="Antibodypedia" id="28526">
    <property type="antibodies" value="148 antibodies from 25 providers"/>
</dbReference>
<dbReference type="DNASU" id="11247"/>
<dbReference type="Ensembl" id="ENST00000349394.6">
    <property type="protein sequence ID" value="ENSP00000333593.6"/>
    <property type="gene ID" value="ENSG00000182379.10"/>
</dbReference>
<dbReference type="GeneID" id="11247"/>
<dbReference type="KEGG" id="hsa:11247"/>
<dbReference type="MANE-Select" id="ENST00000349394.6">
    <property type="protein sequence ID" value="ENSP00000333593.6"/>
    <property type="RefSeq nucleotide sequence ID" value="NM_007224.4"/>
    <property type="RefSeq protein sequence ID" value="NP_009155.1"/>
</dbReference>
<dbReference type="UCSC" id="uc010srf.2">
    <property type="organism name" value="human"/>
</dbReference>
<dbReference type="AGR" id="HGNC:8078"/>
<dbReference type="CTD" id="11247"/>
<dbReference type="DisGeNET" id="11247"/>
<dbReference type="GeneCards" id="NXPH4"/>
<dbReference type="HGNC" id="HGNC:8078">
    <property type="gene designation" value="NXPH4"/>
</dbReference>
<dbReference type="HPA" id="ENSG00000182379">
    <property type="expression patterns" value="Tissue enhanced (brain, skin)"/>
</dbReference>
<dbReference type="MIM" id="604637">
    <property type="type" value="gene"/>
</dbReference>
<dbReference type="neXtProt" id="NX_O95158"/>
<dbReference type="OpenTargets" id="ENSG00000182379"/>
<dbReference type="PharmGKB" id="PA31866"/>
<dbReference type="VEuPathDB" id="HostDB:ENSG00000182379"/>
<dbReference type="eggNOG" id="ENOG502QPNQ">
    <property type="taxonomic scope" value="Eukaryota"/>
</dbReference>
<dbReference type="GeneTree" id="ENSGT00950000182883"/>
<dbReference type="HOGENOM" id="CLU_067114_0_0_1"/>
<dbReference type="InParanoid" id="O95158"/>
<dbReference type="OMA" id="TARAWSW"/>
<dbReference type="OrthoDB" id="9834165at2759"/>
<dbReference type="PAN-GO" id="O95158">
    <property type="GO annotations" value="1 GO annotation based on evolutionary models"/>
</dbReference>
<dbReference type="PhylomeDB" id="O95158"/>
<dbReference type="TreeFam" id="TF333047"/>
<dbReference type="PathwayCommons" id="O95158"/>
<dbReference type="SignaLink" id="O95158"/>
<dbReference type="BioGRID-ORCS" id="11247">
    <property type="hits" value="28 hits in 1154 CRISPR screens"/>
</dbReference>
<dbReference type="ChiTaRS" id="NXPH4">
    <property type="organism name" value="human"/>
</dbReference>
<dbReference type="GenomeRNAi" id="11247"/>
<dbReference type="Pharos" id="O95158">
    <property type="development level" value="Tbio"/>
</dbReference>
<dbReference type="PRO" id="PR:O95158"/>
<dbReference type="Proteomes" id="UP000005640">
    <property type="component" value="Chromosome 12"/>
</dbReference>
<dbReference type="RNAct" id="O95158">
    <property type="molecule type" value="protein"/>
</dbReference>
<dbReference type="Bgee" id="ENSG00000182379">
    <property type="expression patterns" value="Expressed in ganglionic eminence and 105 other cell types or tissues"/>
</dbReference>
<dbReference type="ExpressionAtlas" id="O95158">
    <property type="expression patterns" value="baseline and differential"/>
</dbReference>
<dbReference type="GO" id="GO:0005576">
    <property type="term" value="C:extracellular region"/>
    <property type="evidence" value="ECO:0007669"/>
    <property type="project" value="UniProtKB-SubCell"/>
</dbReference>
<dbReference type="GO" id="GO:0098982">
    <property type="term" value="C:GABA-ergic synapse"/>
    <property type="evidence" value="ECO:0007669"/>
    <property type="project" value="Ensembl"/>
</dbReference>
<dbReference type="GO" id="GO:0005102">
    <property type="term" value="F:signaling receptor binding"/>
    <property type="evidence" value="ECO:0000318"/>
    <property type="project" value="GO_Central"/>
</dbReference>
<dbReference type="GO" id="GO:0050804">
    <property type="term" value="P:modulation of chemical synaptic transmission"/>
    <property type="evidence" value="ECO:0007669"/>
    <property type="project" value="Ensembl"/>
</dbReference>
<dbReference type="GO" id="GO:0007218">
    <property type="term" value="P:neuropeptide signaling pathway"/>
    <property type="evidence" value="ECO:0000303"/>
    <property type="project" value="UniProtKB"/>
</dbReference>
<dbReference type="InterPro" id="IPR010450">
    <property type="entry name" value="Nxph"/>
</dbReference>
<dbReference type="InterPro" id="IPR026845">
    <property type="entry name" value="NXPH/NXPE"/>
</dbReference>
<dbReference type="PANTHER" id="PTHR17103">
    <property type="entry name" value="NEUREXOPHILIN"/>
    <property type="match status" value="1"/>
</dbReference>
<dbReference type="PANTHER" id="PTHR17103:SF10">
    <property type="entry name" value="NEUREXOPHILIN-4"/>
    <property type="match status" value="1"/>
</dbReference>
<dbReference type="Pfam" id="PF06312">
    <property type="entry name" value="Neurexophilin"/>
    <property type="match status" value="2"/>
</dbReference>
<dbReference type="PIRSF" id="PIRSF038019">
    <property type="entry name" value="Neurexophilin"/>
    <property type="match status" value="1"/>
</dbReference>
<gene>
    <name type="primary">NXPH4</name>
    <name type="synonym">NPH4</name>
    <name type="ORF">UNQ1928/PRO4403</name>
</gene>
<name>NXPH4_HUMAN</name>
<reference key="1">
    <citation type="journal article" date="2003" name="Genome Res.">
        <title>The secreted protein discovery initiative (SPDI), a large-scale effort to identify novel human secreted and transmembrane proteins: a bioinformatics assessment.</title>
        <authorList>
            <person name="Clark H.F."/>
            <person name="Gurney A.L."/>
            <person name="Abaya E."/>
            <person name="Baker K."/>
            <person name="Baldwin D.T."/>
            <person name="Brush J."/>
            <person name="Chen J."/>
            <person name="Chow B."/>
            <person name="Chui C."/>
            <person name="Crowley C."/>
            <person name="Currell B."/>
            <person name="Deuel B."/>
            <person name="Dowd P."/>
            <person name="Eaton D."/>
            <person name="Foster J.S."/>
            <person name="Grimaldi C."/>
            <person name="Gu Q."/>
            <person name="Hass P.E."/>
            <person name="Heldens S."/>
            <person name="Huang A."/>
            <person name="Kim H.S."/>
            <person name="Klimowski L."/>
            <person name="Jin Y."/>
            <person name="Johnson S."/>
            <person name="Lee J."/>
            <person name="Lewis L."/>
            <person name="Liao D."/>
            <person name="Mark M.R."/>
            <person name="Robbie E."/>
            <person name="Sanchez C."/>
            <person name="Schoenfeld J."/>
            <person name="Seshagiri S."/>
            <person name="Simmons L."/>
            <person name="Singh J."/>
            <person name="Smith V."/>
            <person name="Stinson J."/>
            <person name="Vagts A."/>
            <person name="Vandlen R.L."/>
            <person name="Watanabe C."/>
            <person name="Wieand D."/>
            <person name="Woods K."/>
            <person name="Xie M.-H."/>
            <person name="Yansura D.G."/>
            <person name="Yi S."/>
            <person name="Yu G."/>
            <person name="Yuan J."/>
            <person name="Zhang M."/>
            <person name="Zhang Z."/>
            <person name="Goddard A.D."/>
            <person name="Wood W.I."/>
            <person name="Godowski P.J."/>
            <person name="Gray A.M."/>
        </authorList>
    </citation>
    <scope>NUCLEOTIDE SEQUENCE [LARGE SCALE MRNA]</scope>
</reference>
<reference key="2">
    <citation type="journal article" date="2004" name="Nat. Genet.">
        <title>Complete sequencing and characterization of 21,243 full-length human cDNAs.</title>
        <authorList>
            <person name="Ota T."/>
            <person name="Suzuki Y."/>
            <person name="Nishikawa T."/>
            <person name="Otsuki T."/>
            <person name="Sugiyama T."/>
            <person name="Irie R."/>
            <person name="Wakamatsu A."/>
            <person name="Hayashi K."/>
            <person name="Sato H."/>
            <person name="Nagai K."/>
            <person name="Kimura K."/>
            <person name="Makita H."/>
            <person name="Sekine M."/>
            <person name="Obayashi M."/>
            <person name="Nishi T."/>
            <person name="Shibahara T."/>
            <person name="Tanaka T."/>
            <person name="Ishii S."/>
            <person name="Yamamoto J."/>
            <person name="Saito K."/>
            <person name="Kawai Y."/>
            <person name="Isono Y."/>
            <person name="Nakamura Y."/>
            <person name="Nagahari K."/>
            <person name="Murakami K."/>
            <person name="Yasuda T."/>
            <person name="Iwayanagi T."/>
            <person name="Wagatsuma M."/>
            <person name="Shiratori A."/>
            <person name="Sudo H."/>
            <person name="Hosoiri T."/>
            <person name="Kaku Y."/>
            <person name="Kodaira H."/>
            <person name="Kondo H."/>
            <person name="Sugawara M."/>
            <person name="Takahashi M."/>
            <person name="Kanda K."/>
            <person name="Yokoi T."/>
            <person name="Furuya T."/>
            <person name="Kikkawa E."/>
            <person name="Omura Y."/>
            <person name="Abe K."/>
            <person name="Kamihara K."/>
            <person name="Katsuta N."/>
            <person name="Sato K."/>
            <person name="Tanikawa M."/>
            <person name="Yamazaki M."/>
            <person name="Ninomiya K."/>
            <person name="Ishibashi T."/>
            <person name="Yamashita H."/>
            <person name="Murakawa K."/>
            <person name="Fujimori K."/>
            <person name="Tanai H."/>
            <person name="Kimata M."/>
            <person name="Watanabe M."/>
            <person name="Hiraoka S."/>
            <person name="Chiba Y."/>
            <person name="Ishida S."/>
            <person name="Ono Y."/>
            <person name="Takiguchi S."/>
            <person name="Watanabe S."/>
            <person name="Yosida M."/>
            <person name="Hotuta T."/>
            <person name="Kusano J."/>
            <person name="Kanehori K."/>
            <person name="Takahashi-Fujii A."/>
            <person name="Hara H."/>
            <person name="Tanase T.-O."/>
            <person name="Nomura Y."/>
            <person name="Togiya S."/>
            <person name="Komai F."/>
            <person name="Hara R."/>
            <person name="Takeuchi K."/>
            <person name="Arita M."/>
            <person name="Imose N."/>
            <person name="Musashino K."/>
            <person name="Yuuki H."/>
            <person name="Oshima A."/>
            <person name="Sasaki N."/>
            <person name="Aotsuka S."/>
            <person name="Yoshikawa Y."/>
            <person name="Matsunawa H."/>
            <person name="Ichihara T."/>
            <person name="Shiohata N."/>
            <person name="Sano S."/>
            <person name="Moriya S."/>
            <person name="Momiyama H."/>
            <person name="Satoh N."/>
            <person name="Takami S."/>
            <person name="Terashima Y."/>
            <person name="Suzuki O."/>
            <person name="Nakagawa S."/>
            <person name="Senoh A."/>
            <person name="Mizoguchi H."/>
            <person name="Goto Y."/>
            <person name="Shimizu F."/>
            <person name="Wakebe H."/>
            <person name="Hishigaki H."/>
            <person name="Watanabe T."/>
            <person name="Sugiyama A."/>
            <person name="Takemoto M."/>
            <person name="Kawakami B."/>
            <person name="Yamazaki M."/>
            <person name="Watanabe K."/>
            <person name="Kumagai A."/>
            <person name="Itakura S."/>
            <person name="Fukuzumi Y."/>
            <person name="Fujimori Y."/>
            <person name="Komiyama M."/>
            <person name="Tashiro H."/>
            <person name="Tanigami A."/>
            <person name="Fujiwara T."/>
            <person name="Ono T."/>
            <person name="Yamada K."/>
            <person name="Fujii Y."/>
            <person name="Ozaki K."/>
            <person name="Hirao M."/>
            <person name="Ohmori Y."/>
            <person name="Kawabata A."/>
            <person name="Hikiji T."/>
            <person name="Kobatake N."/>
            <person name="Inagaki H."/>
            <person name="Ikema Y."/>
            <person name="Okamoto S."/>
            <person name="Okitani R."/>
            <person name="Kawakami T."/>
            <person name="Noguchi S."/>
            <person name="Itoh T."/>
            <person name="Shigeta K."/>
            <person name="Senba T."/>
            <person name="Matsumura K."/>
            <person name="Nakajima Y."/>
            <person name="Mizuno T."/>
            <person name="Morinaga M."/>
            <person name="Sasaki M."/>
            <person name="Togashi T."/>
            <person name="Oyama M."/>
            <person name="Hata H."/>
            <person name="Watanabe M."/>
            <person name="Komatsu T."/>
            <person name="Mizushima-Sugano J."/>
            <person name="Satoh T."/>
            <person name="Shirai Y."/>
            <person name="Takahashi Y."/>
            <person name="Nakagawa K."/>
            <person name="Okumura K."/>
            <person name="Nagase T."/>
            <person name="Nomura N."/>
            <person name="Kikuchi H."/>
            <person name="Masuho Y."/>
            <person name="Yamashita R."/>
            <person name="Nakai K."/>
            <person name="Yada T."/>
            <person name="Nakamura Y."/>
            <person name="Ohara O."/>
            <person name="Isogai T."/>
            <person name="Sugano S."/>
        </authorList>
    </citation>
    <scope>NUCLEOTIDE SEQUENCE [LARGE SCALE MRNA]</scope>
</reference>
<reference key="3">
    <citation type="journal article" date="2004" name="Genome Res.">
        <title>The status, quality, and expansion of the NIH full-length cDNA project: the Mammalian Gene Collection (MGC).</title>
        <authorList>
            <consortium name="The MGC Project Team"/>
        </authorList>
    </citation>
    <scope>NUCLEOTIDE SEQUENCE [LARGE SCALE MRNA]</scope>
    <source>
        <tissue>Brain</tissue>
    </source>
</reference>
<reference key="4">
    <citation type="journal article" date="1998" name="J. Neurosci.">
        <title>Neurexophilins form a conserved family of neuropeptide-like glycoproteins.</title>
        <authorList>
            <person name="Missler M."/>
            <person name="Suedhof T.C."/>
        </authorList>
    </citation>
    <scope>NUCLEOTIDE SEQUENCE [MRNA] OF 225-308</scope>
</reference>
<accession>O95158</accession>
<accession>A8K4I4</accession>
<accession>Q7Z6L3</accession>
<accession>Q8N462</accession>
<organism>
    <name type="scientific">Homo sapiens</name>
    <name type="common">Human</name>
    <dbReference type="NCBI Taxonomy" id="9606"/>
    <lineage>
        <taxon>Eukaryota</taxon>
        <taxon>Metazoa</taxon>
        <taxon>Chordata</taxon>
        <taxon>Craniata</taxon>
        <taxon>Vertebrata</taxon>
        <taxon>Euteleostomi</taxon>
        <taxon>Mammalia</taxon>
        <taxon>Eutheria</taxon>
        <taxon>Euarchontoglires</taxon>
        <taxon>Primates</taxon>
        <taxon>Haplorrhini</taxon>
        <taxon>Catarrhini</taxon>
        <taxon>Hominidae</taxon>
        <taxon>Homo</taxon>
    </lineage>
</organism>
<feature type="signal peptide" evidence="2">
    <location>
        <begin position="1"/>
        <end position="23"/>
    </location>
</feature>
<feature type="chain" id="PRO_0000020068" description="Neurexophilin-4">
    <location>
        <begin position="24"/>
        <end position="308"/>
    </location>
</feature>
<feature type="region of interest" description="II">
    <location>
        <begin position="24"/>
        <end position="84"/>
    </location>
</feature>
<feature type="region of interest" description="Disordered" evidence="3">
    <location>
        <begin position="40"/>
        <end position="59"/>
    </location>
</feature>
<feature type="region of interest" description="III">
    <location>
        <begin position="85"/>
        <end position="163"/>
    </location>
</feature>
<feature type="region of interest" description="IV (linker domain)">
    <location>
        <begin position="164"/>
        <end position="224"/>
    </location>
</feature>
<feature type="region of interest" description="V (Cys-rich)">
    <location>
        <begin position="225"/>
        <end position="308"/>
    </location>
</feature>
<feature type="compositionally biased region" description="Low complexity" evidence="3">
    <location>
        <begin position="40"/>
        <end position="51"/>
    </location>
</feature>
<feature type="glycosylation site" description="N-linked (GlcNAc...) asparagine" evidence="2">
    <location>
        <position position="72"/>
    </location>
</feature>
<feature type="glycosylation site" description="N-linked (GlcNAc...) asparagine" evidence="2">
    <location>
        <position position="133"/>
    </location>
</feature>
<feature type="glycosylation site" description="N-linked (GlcNAc...) asparagine" evidence="2">
    <location>
        <position position="143"/>
    </location>
</feature>
<feature type="glycosylation site" description="N-linked (GlcNAc...) asparagine" evidence="2">
    <location>
        <position position="149"/>
    </location>
</feature>
<feature type="sequence conflict" description="In Ref. 3; AAH36679." evidence="4" ref="3">
    <original>S</original>
    <variation>T</variation>
    <location>
        <position position="56"/>
    </location>
</feature>
<feature type="sequence conflict" description="In Ref. 4; AAD02282." evidence="4" ref="4">
    <original>KE</original>
    <variation>RG</variation>
    <location>
        <begin position="226"/>
        <end position="227"/>
    </location>
</feature>
<feature type="sequence conflict" description="In Ref. 3; AAH36679." evidence="4" ref="3">
    <original>P</original>
    <variation>Q</variation>
    <location>
        <position position="296"/>
    </location>
</feature>
<proteinExistence type="evidence at protein level"/>